<keyword id="KW-0143">Chaperone</keyword>
<keyword id="KW-0963">Cytoplasm</keyword>
<accession>A7GKF9</accession>
<sequence>MLKPLGDRVVIELVQAEEKTASGIVLPDTAKEKPQEGKVIAVGTGRVLENGERVALEVAAGDRIIFSKYAGTEVKYEGTDYLILRESDILAVIG</sequence>
<dbReference type="EMBL" id="CP000764">
    <property type="protein sequence ID" value="ABS20617.1"/>
    <property type="molecule type" value="Genomic_DNA"/>
</dbReference>
<dbReference type="RefSeq" id="WP_011983376.1">
    <property type="nucleotide sequence ID" value="NC_009674.1"/>
</dbReference>
<dbReference type="SMR" id="A7GKF9"/>
<dbReference type="STRING" id="315749.Bcer98_0251"/>
<dbReference type="GeneID" id="33895595"/>
<dbReference type="KEGG" id="bcy:Bcer98_0251"/>
<dbReference type="eggNOG" id="COG0234">
    <property type="taxonomic scope" value="Bacteria"/>
</dbReference>
<dbReference type="HOGENOM" id="CLU_132825_2_0_9"/>
<dbReference type="OrthoDB" id="9806791at2"/>
<dbReference type="Proteomes" id="UP000002300">
    <property type="component" value="Chromosome"/>
</dbReference>
<dbReference type="GO" id="GO:0005737">
    <property type="term" value="C:cytoplasm"/>
    <property type="evidence" value="ECO:0007669"/>
    <property type="project" value="UniProtKB-SubCell"/>
</dbReference>
<dbReference type="GO" id="GO:0005524">
    <property type="term" value="F:ATP binding"/>
    <property type="evidence" value="ECO:0007669"/>
    <property type="project" value="InterPro"/>
</dbReference>
<dbReference type="GO" id="GO:0046872">
    <property type="term" value="F:metal ion binding"/>
    <property type="evidence" value="ECO:0007669"/>
    <property type="project" value="TreeGrafter"/>
</dbReference>
<dbReference type="GO" id="GO:0044183">
    <property type="term" value="F:protein folding chaperone"/>
    <property type="evidence" value="ECO:0007669"/>
    <property type="project" value="InterPro"/>
</dbReference>
<dbReference type="GO" id="GO:0051087">
    <property type="term" value="F:protein-folding chaperone binding"/>
    <property type="evidence" value="ECO:0007669"/>
    <property type="project" value="TreeGrafter"/>
</dbReference>
<dbReference type="GO" id="GO:0051082">
    <property type="term" value="F:unfolded protein binding"/>
    <property type="evidence" value="ECO:0007669"/>
    <property type="project" value="TreeGrafter"/>
</dbReference>
<dbReference type="GO" id="GO:0051085">
    <property type="term" value="P:chaperone cofactor-dependent protein refolding"/>
    <property type="evidence" value="ECO:0007669"/>
    <property type="project" value="TreeGrafter"/>
</dbReference>
<dbReference type="CDD" id="cd00320">
    <property type="entry name" value="cpn10"/>
    <property type="match status" value="1"/>
</dbReference>
<dbReference type="FunFam" id="2.30.33.40:FF:000001">
    <property type="entry name" value="10 kDa chaperonin"/>
    <property type="match status" value="1"/>
</dbReference>
<dbReference type="Gene3D" id="2.30.33.40">
    <property type="entry name" value="GroES chaperonin"/>
    <property type="match status" value="1"/>
</dbReference>
<dbReference type="HAMAP" id="MF_00580">
    <property type="entry name" value="CH10"/>
    <property type="match status" value="1"/>
</dbReference>
<dbReference type="InterPro" id="IPR020818">
    <property type="entry name" value="Chaperonin_GroES"/>
</dbReference>
<dbReference type="InterPro" id="IPR037124">
    <property type="entry name" value="Chaperonin_GroES_sf"/>
</dbReference>
<dbReference type="InterPro" id="IPR018369">
    <property type="entry name" value="Chaprnonin_Cpn10_CS"/>
</dbReference>
<dbReference type="InterPro" id="IPR011032">
    <property type="entry name" value="GroES-like_sf"/>
</dbReference>
<dbReference type="NCBIfam" id="NF001527">
    <property type="entry name" value="PRK00364.1-2"/>
    <property type="match status" value="1"/>
</dbReference>
<dbReference type="NCBIfam" id="NF001530">
    <property type="entry name" value="PRK00364.1-6"/>
    <property type="match status" value="1"/>
</dbReference>
<dbReference type="NCBIfam" id="NF001531">
    <property type="entry name" value="PRK00364.2-2"/>
    <property type="match status" value="1"/>
</dbReference>
<dbReference type="NCBIfam" id="NF001533">
    <property type="entry name" value="PRK00364.2-4"/>
    <property type="match status" value="1"/>
</dbReference>
<dbReference type="NCBIfam" id="NF001534">
    <property type="entry name" value="PRK00364.2-5"/>
    <property type="match status" value="1"/>
</dbReference>
<dbReference type="PANTHER" id="PTHR10772">
    <property type="entry name" value="10 KDA HEAT SHOCK PROTEIN"/>
    <property type="match status" value="1"/>
</dbReference>
<dbReference type="PANTHER" id="PTHR10772:SF58">
    <property type="entry name" value="CO-CHAPERONIN GROES"/>
    <property type="match status" value="1"/>
</dbReference>
<dbReference type="Pfam" id="PF00166">
    <property type="entry name" value="Cpn10"/>
    <property type="match status" value="1"/>
</dbReference>
<dbReference type="PRINTS" id="PR00297">
    <property type="entry name" value="CHAPERONIN10"/>
</dbReference>
<dbReference type="SMART" id="SM00883">
    <property type="entry name" value="Cpn10"/>
    <property type="match status" value="1"/>
</dbReference>
<dbReference type="SUPFAM" id="SSF50129">
    <property type="entry name" value="GroES-like"/>
    <property type="match status" value="1"/>
</dbReference>
<dbReference type="PROSITE" id="PS00681">
    <property type="entry name" value="CHAPERONINS_CPN10"/>
    <property type="match status" value="1"/>
</dbReference>
<protein>
    <recommendedName>
        <fullName evidence="1">Co-chaperonin GroES</fullName>
    </recommendedName>
    <alternativeName>
        <fullName evidence="1">10 kDa chaperonin</fullName>
    </alternativeName>
    <alternativeName>
        <fullName evidence="1">Chaperonin-10</fullName>
        <shortName evidence="1">Cpn10</shortName>
    </alternativeName>
</protein>
<comment type="function">
    <text evidence="1">Together with the chaperonin GroEL, plays an essential role in assisting protein folding. The GroEL-GroES system forms a nano-cage that allows encapsulation of the non-native substrate proteins and provides a physical environment optimized to promote and accelerate protein folding. GroES binds to the apical surface of the GroEL ring, thereby capping the opening of the GroEL channel.</text>
</comment>
<comment type="subunit">
    <text evidence="1">Heptamer of 7 subunits arranged in a ring. Interacts with the chaperonin GroEL.</text>
</comment>
<comment type="subcellular location">
    <subcellularLocation>
        <location evidence="1">Cytoplasm</location>
    </subcellularLocation>
</comment>
<comment type="similarity">
    <text evidence="1">Belongs to the GroES chaperonin family.</text>
</comment>
<evidence type="ECO:0000255" key="1">
    <source>
        <dbReference type="HAMAP-Rule" id="MF_00580"/>
    </source>
</evidence>
<organism>
    <name type="scientific">Bacillus cytotoxicus (strain DSM 22905 / CIP 110041 / 391-98 / NVH 391-98)</name>
    <dbReference type="NCBI Taxonomy" id="315749"/>
    <lineage>
        <taxon>Bacteria</taxon>
        <taxon>Bacillati</taxon>
        <taxon>Bacillota</taxon>
        <taxon>Bacilli</taxon>
        <taxon>Bacillales</taxon>
        <taxon>Bacillaceae</taxon>
        <taxon>Bacillus</taxon>
        <taxon>Bacillus cereus group</taxon>
    </lineage>
</organism>
<feature type="chain" id="PRO_1000082364" description="Co-chaperonin GroES">
    <location>
        <begin position="1"/>
        <end position="94"/>
    </location>
</feature>
<gene>
    <name evidence="1" type="primary">groES</name>
    <name evidence="1" type="synonym">groS</name>
    <name type="ordered locus">Bcer98_0251</name>
</gene>
<proteinExistence type="inferred from homology"/>
<reference key="1">
    <citation type="journal article" date="2008" name="Chem. Biol. Interact.">
        <title>Extending the Bacillus cereus group genomics to putative food-borne pathogens of different toxicity.</title>
        <authorList>
            <person name="Lapidus A."/>
            <person name="Goltsman E."/>
            <person name="Auger S."/>
            <person name="Galleron N."/>
            <person name="Segurens B."/>
            <person name="Dossat C."/>
            <person name="Land M.L."/>
            <person name="Broussolle V."/>
            <person name="Brillard J."/>
            <person name="Guinebretiere M.-H."/>
            <person name="Sanchis V."/>
            <person name="Nguen-the C."/>
            <person name="Lereclus D."/>
            <person name="Richardson P."/>
            <person name="Wincker P."/>
            <person name="Weissenbach J."/>
            <person name="Ehrlich S.D."/>
            <person name="Sorokin A."/>
        </authorList>
    </citation>
    <scope>NUCLEOTIDE SEQUENCE [LARGE SCALE GENOMIC DNA]</scope>
    <source>
        <strain>DSM 22905 / CIP 110041 / 391-98 / NVH 391-98</strain>
    </source>
</reference>
<name>CH10_BACCN</name>